<evidence type="ECO:0000255" key="1">
    <source>
        <dbReference type="PROSITE-ProRule" id="PRU00034"/>
    </source>
</evidence>
<evidence type="ECO:0000256" key="2">
    <source>
        <dbReference type="SAM" id="MobiDB-lite"/>
    </source>
</evidence>
<organism>
    <name type="scientific">Caenorhabditis elegans</name>
    <dbReference type="NCBI Taxonomy" id="6239"/>
    <lineage>
        <taxon>Eukaryota</taxon>
        <taxon>Metazoa</taxon>
        <taxon>Ecdysozoa</taxon>
        <taxon>Nematoda</taxon>
        <taxon>Chromadorea</taxon>
        <taxon>Rhabditida</taxon>
        <taxon>Rhabditina</taxon>
        <taxon>Rhabditomorpha</taxon>
        <taxon>Rhabditoidea</taxon>
        <taxon>Rhabditidae</taxon>
        <taxon>Peloderinae</taxon>
        <taxon>Caenorhabditis</taxon>
    </lineage>
</organism>
<keyword id="KW-1185">Reference proteome</keyword>
<name>YUY1_CAEEL</name>
<proteinExistence type="predicted"/>
<dbReference type="EMBL" id="Z49910">
    <property type="protein sequence ID" value="CAA90124.4"/>
    <property type="molecule type" value="Genomic_DNA"/>
</dbReference>
<dbReference type="PIR" id="B88252">
    <property type="entry name" value="B88252"/>
</dbReference>
<dbReference type="PIR" id="T19409">
    <property type="entry name" value="T19409"/>
</dbReference>
<dbReference type="RefSeq" id="NP_495918.1">
    <property type="nucleotide sequence ID" value="NM_063517.8"/>
</dbReference>
<dbReference type="SMR" id="P54073"/>
<dbReference type="BioGRID" id="39761">
    <property type="interactions" value="4"/>
</dbReference>
<dbReference type="FunCoup" id="P54073">
    <property type="interactions" value="2016"/>
</dbReference>
<dbReference type="STRING" id="6239.F44G4.1.1"/>
<dbReference type="PaxDb" id="6239-F44G4.1"/>
<dbReference type="PeptideAtlas" id="P54073"/>
<dbReference type="EnsemblMetazoa" id="F44G4.1.1">
    <property type="protein sequence ID" value="F44G4.1.1"/>
    <property type="gene ID" value="WBGene00009711"/>
</dbReference>
<dbReference type="GeneID" id="174434"/>
<dbReference type="KEGG" id="cel:CELE_F44G4.1"/>
<dbReference type="UCSC" id="F44G4.1">
    <property type="organism name" value="c. elegans"/>
</dbReference>
<dbReference type="AGR" id="WB:WBGene00009711"/>
<dbReference type="CTD" id="174434"/>
<dbReference type="WormBase" id="F44G4.1">
    <property type="protein sequence ID" value="CE28332"/>
    <property type="gene ID" value="WBGene00009711"/>
</dbReference>
<dbReference type="eggNOG" id="KOG2780">
    <property type="taxonomic scope" value="Eukaryota"/>
</dbReference>
<dbReference type="GeneTree" id="ENSGT00940000153231"/>
<dbReference type="HOGENOM" id="CLU_040063_1_1_1"/>
<dbReference type="InParanoid" id="P54073"/>
<dbReference type="OMA" id="EWEHRPD"/>
<dbReference type="OrthoDB" id="10253204at2759"/>
<dbReference type="PhylomeDB" id="P54073"/>
<dbReference type="PRO" id="PR:P54073"/>
<dbReference type="Proteomes" id="UP000001940">
    <property type="component" value="Chromosome II"/>
</dbReference>
<dbReference type="Bgee" id="WBGene00009711">
    <property type="expression patterns" value="Expressed in germ line (C elegans) and 4 other cell types or tissues"/>
</dbReference>
<dbReference type="GO" id="GO:0005730">
    <property type="term" value="C:nucleolus"/>
    <property type="evidence" value="ECO:0000318"/>
    <property type="project" value="GO_Central"/>
</dbReference>
<dbReference type="GO" id="GO:0030687">
    <property type="term" value="C:preribosome, large subunit precursor"/>
    <property type="evidence" value="ECO:0000318"/>
    <property type="project" value="GO_Central"/>
</dbReference>
<dbReference type="GO" id="GO:0042134">
    <property type="term" value="F:rRNA primary transcript binding"/>
    <property type="evidence" value="ECO:0007669"/>
    <property type="project" value="InterPro"/>
</dbReference>
<dbReference type="GO" id="GO:0000460">
    <property type="term" value="P:maturation of 5.8S rRNA"/>
    <property type="evidence" value="ECO:0000318"/>
    <property type="project" value="GO_Central"/>
</dbReference>
<dbReference type="GO" id="GO:0000470">
    <property type="term" value="P:maturation of LSU-rRNA"/>
    <property type="evidence" value="ECO:0000318"/>
    <property type="project" value="GO_Central"/>
</dbReference>
<dbReference type="FunFam" id="3.40.50.10480:FF:000002">
    <property type="entry name" value="Ribosome production factor 1"/>
    <property type="match status" value="1"/>
</dbReference>
<dbReference type="Gene3D" id="3.40.50.10480">
    <property type="entry name" value="Probable brix-domain ribosomal biogenesis protein"/>
    <property type="match status" value="1"/>
</dbReference>
<dbReference type="InterPro" id="IPR007109">
    <property type="entry name" value="Brix"/>
</dbReference>
<dbReference type="InterPro" id="IPR044281">
    <property type="entry name" value="IMP4/RPF1"/>
</dbReference>
<dbReference type="PANTHER" id="PTHR22734:SF3">
    <property type="entry name" value="RIBOSOME PRODUCTION FACTOR 1"/>
    <property type="match status" value="1"/>
</dbReference>
<dbReference type="PANTHER" id="PTHR22734">
    <property type="entry name" value="U3 SMALL NUCLEOLAR RIBONUCLEOPROTEIN PROTEIN IMP4"/>
    <property type="match status" value="1"/>
</dbReference>
<dbReference type="Pfam" id="PF04427">
    <property type="entry name" value="Brix"/>
    <property type="match status" value="1"/>
</dbReference>
<dbReference type="SMART" id="SM00879">
    <property type="entry name" value="Brix"/>
    <property type="match status" value="1"/>
</dbReference>
<dbReference type="SUPFAM" id="SSF52954">
    <property type="entry name" value="Class II aaRS ABD-related"/>
    <property type="match status" value="1"/>
</dbReference>
<dbReference type="PROSITE" id="PS50833">
    <property type="entry name" value="BRIX"/>
    <property type="match status" value="1"/>
</dbReference>
<protein>
    <recommendedName>
        <fullName>Brix domain-containing protein F44G4.1</fullName>
    </recommendedName>
</protein>
<accession>P54073</accession>
<accession>Q20418</accession>
<gene>
    <name type="ORF">F44G4.1</name>
</gene>
<feature type="chain" id="PRO_0000120263" description="Brix domain-containing protein F44G4.1">
    <location>
        <begin position="1"/>
        <end position="384"/>
    </location>
</feature>
<feature type="domain" description="Brix" evidence="1">
    <location>
        <begin position="177"/>
        <end position="360"/>
    </location>
</feature>
<feature type="region of interest" description="Disordered" evidence="2">
    <location>
        <begin position="1"/>
        <end position="58"/>
    </location>
</feature>
<feature type="region of interest" description="Disordered" evidence="2">
    <location>
        <begin position="82"/>
        <end position="135"/>
    </location>
</feature>
<feature type="compositionally biased region" description="Acidic residues" evidence="2">
    <location>
        <begin position="18"/>
        <end position="48"/>
    </location>
</feature>
<feature type="compositionally biased region" description="Basic residues" evidence="2">
    <location>
        <begin position="96"/>
        <end position="114"/>
    </location>
</feature>
<feature type="compositionally biased region" description="Basic and acidic residues" evidence="2">
    <location>
        <begin position="115"/>
        <end position="127"/>
    </location>
</feature>
<reference key="1">
    <citation type="journal article" date="1998" name="Science">
        <title>Genome sequence of the nematode C. elegans: a platform for investigating biology.</title>
        <authorList>
            <consortium name="The C. elegans sequencing consortium"/>
        </authorList>
    </citation>
    <scope>NUCLEOTIDE SEQUENCE [LARGE SCALE GENOMIC DNA]</scope>
    <source>
        <strain>Bristol N2</strain>
    </source>
</reference>
<sequence>MAPKKSKKSKKEESMIDFVEEEVTGDVDEDGFEQAEDMPDEVDSDEDEPPKKKKKVVKKEIKQELELTDEKLQELLEKYEASKATATKTKDDFKHLPKSQRGKALKRALRKDKRARQGERAQIRDELGESAPQKEVPKTIESMREYDATMVNEEDDEVEHDEANDEFAPYFNRETSPKVMITMTPKAKITTFKFCFELQKCIPNSEIFTRKNVLLKTIIEQAKEREFTDLLVVHEDRKKPNGIIFCHLPEGPTAYFKINSLTFTQDLKKFGESTSHFPEVILNNFNTRLGHNIARMLACLFPHDPKFTGRRVVTFHNQRDYIFFRHHRYEFKKEGSKAALLELGPRFTLRLKWLQKGTFDAKWGEFEWVLKRHEMETSRRRFFL</sequence>